<evidence type="ECO:0000250" key="1">
    <source>
        <dbReference type="UniProtKB" id="Q9R020"/>
    </source>
</evidence>
<evidence type="ECO:0000255" key="2">
    <source>
        <dbReference type="PROSITE-ProRule" id="PRU00322"/>
    </source>
</evidence>
<evidence type="ECO:0000256" key="3">
    <source>
        <dbReference type="SAM" id="MobiDB-lite"/>
    </source>
</evidence>
<evidence type="ECO:0000269" key="4">
    <source>
    </source>
</evidence>
<evidence type="ECO:0000269" key="5">
    <source>
    </source>
</evidence>
<evidence type="ECO:0000269" key="6">
    <source>
    </source>
</evidence>
<evidence type="ECO:0000269" key="7">
    <source>
    </source>
</evidence>
<evidence type="ECO:0000269" key="8">
    <source ref="6"/>
</evidence>
<evidence type="ECO:0000303" key="9">
    <source>
    </source>
</evidence>
<evidence type="ECO:0000303" key="10">
    <source>
    </source>
</evidence>
<evidence type="ECO:0000303" key="11">
    <source>
    </source>
</evidence>
<evidence type="ECO:0000303" key="12">
    <source ref="3"/>
</evidence>
<evidence type="ECO:0000303" key="13">
    <source ref="4"/>
</evidence>
<evidence type="ECO:0000305" key="14"/>
<evidence type="ECO:0007744" key="15">
    <source>
    </source>
</evidence>
<evidence type="ECO:0007744" key="16">
    <source>
    </source>
</evidence>
<evidence type="ECO:0007744" key="17">
    <source>
    </source>
</evidence>
<evidence type="ECO:0007744" key="18">
    <source>
    </source>
</evidence>
<evidence type="ECO:0007744" key="19">
    <source>
    </source>
</evidence>
<evidence type="ECO:0007744" key="20">
    <source>
    </source>
</evidence>
<evidence type="ECO:0007744" key="21">
    <source>
    </source>
</evidence>
<evidence type="ECO:0007744" key="22">
    <source>
    </source>
</evidence>
<evidence type="ECO:0007744" key="23">
    <source>
    </source>
</evidence>
<evidence type="ECO:0007744" key="24">
    <source>
    </source>
</evidence>
<evidence type="ECO:0007744" key="25">
    <source>
    </source>
</evidence>
<evidence type="ECO:0007829" key="26">
    <source>
        <dbReference type="PDB" id="1N0Z"/>
    </source>
</evidence>
<evidence type="ECO:0007829" key="27">
    <source>
        <dbReference type="PDB" id="2K1P"/>
    </source>
</evidence>
<evidence type="ECO:0007829" key="28">
    <source>
        <dbReference type="PDB" id="3G9Y"/>
    </source>
</evidence>
<accession>O95218</accession>
<accession>D3DQ75</accession>
<accession>Q53GS3</accession>
<accession>Q59F92</accession>
<accession>Q5VV33</accession>
<accession>Q5VV34</accession>
<accession>Q8IXN6</accession>
<accession>Q9UP63</accession>
<sequence>MSTKNFRVSDGDWICPDKKCGNVNFARRTSCNRCGREKTTEAKMMKAGGTEIGKTLAEKSRGLFSANDWQCKTCSNVNWARRSECNMCNTPKYAKLEERTGYGGGFNERENVEYIEREESDGEYDEFGRKKKKYRGKAVGPASILKEVEDKESEGEEEDEDEDLSKYKLDEDEDEDDADLSKYNLDASEEEDSNKKKSNRRSRSKSRSSHSRSSSRSSSPSSSRSRSRSRSRSSSSSQSRSRSSSRERSRSRGSKSRSSSRSHRGSSSPRKRSYSSSSSSPERNRKRSRSRSSSSGDRKKRRTRSRSPERRHRSSSGSSHSGSRSSSKKK</sequence>
<gene>
    <name type="primary">ZRANB2</name>
    <name type="synonym">ZIS</name>
    <name type="synonym">ZNF265</name>
</gene>
<organism>
    <name type="scientific">Homo sapiens</name>
    <name type="common">Human</name>
    <dbReference type="NCBI Taxonomy" id="9606"/>
    <lineage>
        <taxon>Eukaryota</taxon>
        <taxon>Metazoa</taxon>
        <taxon>Chordata</taxon>
        <taxon>Craniata</taxon>
        <taxon>Vertebrata</taxon>
        <taxon>Euteleostomi</taxon>
        <taxon>Mammalia</taxon>
        <taxon>Eutheria</taxon>
        <taxon>Euarchontoglires</taxon>
        <taxon>Primates</taxon>
        <taxon>Haplorrhini</taxon>
        <taxon>Catarrhini</taxon>
        <taxon>Hominidae</taxon>
        <taxon>Homo</taxon>
    </lineage>
</organism>
<proteinExistence type="evidence at protein level"/>
<comment type="function">
    <text evidence="4 7">Splice factor required for alternative splicing of TRA2B/SFRS10 transcripts. Binds to ssRNA containing the consensus sequence 5'-AGGUAA-3' (PubMed:21256132). May interfere with constitutive 5'-splice site selection.</text>
</comment>
<comment type="subunit">
    <text evidence="4 6">Interacts with the C-terminal half of SNRNP70, the Arg/Ser-rich domain of AKAP17A as well as with U2AF1 and CLK1.</text>
</comment>
<comment type="interaction">
    <interactant intactId="EBI-1051583">
        <id>O95218</id>
    </interactant>
    <interactant intactId="EBI-1042725">
        <id>Q02040</id>
        <label>AKAP17A</label>
    </interactant>
    <organismsDiffer>false</organismsDiffer>
    <experiments>5</experiments>
</comment>
<comment type="interaction">
    <interactant intactId="EBI-1051583">
        <id>O95218</id>
    </interactant>
    <interactant intactId="EBI-743313">
        <id>P49407</id>
        <label>ARRB1</label>
    </interactant>
    <organismsDiffer>false</organismsDiffer>
    <experiments>4</experiments>
</comment>
<comment type="interaction">
    <interactant intactId="EBI-1051583">
        <id>O95218</id>
    </interactant>
    <interactant intactId="EBI-714559">
        <id>P32121</id>
        <label>ARRB2</label>
    </interactant>
    <organismsDiffer>false</organismsDiffer>
    <experiments>4</experiments>
</comment>
<comment type="interaction">
    <interactant intactId="EBI-1051583">
        <id>O95218</id>
    </interactant>
    <interactant intactId="EBI-5323863">
        <id>Q5S007</id>
        <label>LRRK2</label>
    </interactant>
    <organismsDiffer>false</organismsDiffer>
    <experiments>2</experiments>
</comment>
<comment type="subcellular location">
    <subcellularLocation>
        <location evidence="4">Nucleus</location>
    </subcellularLocation>
</comment>
<comment type="alternative products">
    <event type="alternative splicing"/>
    <isoform>
        <id>O95218-1</id>
        <name>1</name>
        <name>ZIS-1</name>
        <sequence type="displayed"/>
    </isoform>
    <isoform>
        <id>O95218-2</id>
        <name>2</name>
        <name>ZIS-2</name>
        <sequence type="described" ref="VSP_024945"/>
    </isoform>
</comment>
<comment type="domain">
    <text>The RanBP2-type zinc fingers mediate binding to RNA.</text>
</comment>
<comment type="PTM">
    <text>Isoform 2 is phosphorylated on Ser-310 upon DNA damage, probably by ATM or ATR.</text>
</comment>
<comment type="similarity">
    <text evidence="14">Belongs to the ZRANB2 family.</text>
</comment>
<comment type="sequence caution" evidence="14">
    <conflict type="frameshift">
        <sequence resource="EMBL-CDS" id="AAD09746"/>
    </conflict>
</comment>
<comment type="sequence caution" evidence="14">
    <conflict type="frameshift">
        <sequence resource="EMBL-CDS" id="AAD09747"/>
    </conflict>
</comment>
<comment type="sequence caution" evidence="14">
    <conflict type="miscellaneous discrepancy">
        <sequence resource="EMBL-CDS" id="BAD92805"/>
    </conflict>
    <text>Intron retention.</text>
</comment>
<comment type="sequence caution" evidence="14">
    <conflict type="frameshift">
        <sequence resource="EMBL-CDS" id="CAB66879"/>
    </conflict>
</comment>
<feature type="chain" id="PRO_0000066585" description="Zinc finger Ran-binding domain-containing protein 2">
    <location>
        <begin position="1"/>
        <end position="330"/>
    </location>
</feature>
<feature type="zinc finger region" description="RanBP2-type 1" evidence="2">
    <location>
        <begin position="9"/>
        <end position="40"/>
    </location>
</feature>
<feature type="zinc finger region" description="RanBP2-type 2" evidence="2">
    <location>
        <begin position="65"/>
        <end position="94"/>
    </location>
</feature>
<feature type="region of interest" description="Disordered" evidence="3">
    <location>
        <begin position="117"/>
        <end position="330"/>
    </location>
</feature>
<feature type="region of interest" description="Required for nuclear targeting">
    <location>
        <begin position="151"/>
        <end position="324"/>
    </location>
</feature>
<feature type="compositionally biased region" description="Acidic residues" evidence="3">
    <location>
        <begin position="150"/>
        <end position="163"/>
    </location>
</feature>
<feature type="compositionally biased region" description="Basic residues" evidence="3">
    <location>
        <begin position="196"/>
        <end position="210"/>
    </location>
</feature>
<feature type="compositionally biased region" description="Low complexity" evidence="3">
    <location>
        <begin position="211"/>
        <end position="224"/>
    </location>
</feature>
<feature type="compositionally biased region" description="Low complexity" evidence="3">
    <location>
        <begin position="232"/>
        <end position="242"/>
    </location>
</feature>
<feature type="compositionally biased region" description="Basic residues" evidence="3">
    <location>
        <begin position="251"/>
        <end position="273"/>
    </location>
</feature>
<feature type="compositionally biased region" description="Basic residues" evidence="3">
    <location>
        <begin position="298"/>
        <end position="314"/>
    </location>
</feature>
<feature type="compositionally biased region" description="Low complexity" evidence="3">
    <location>
        <begin position="315"/>
        <end position="330"/>
    </location>
</feature>
<feature type="modified residue" description="Phosphoserine" evidence="22">
    <location>
        <position position="9"/>
    </location>
</feature>
<feature type="modified residue" description="N6-acetyllysine" evidence="1">
    <location>
        <position position="18"/>
    </location>
</feature>
<feature type="modified residue" description="N6-acetyllysine" evidence="20">
    <location>
        <position position="54"/>
    </location>
</feature>
<feature type="modified residue" description="N6-acetyllysine" evidence="1">
    <location>
        <position position="92"/>
    </location>
</feature>
<feature type="modified residue" description="Phosphoserine" evidence="15 17 18 19 21 22 23 24 25">
    <location>
        <position position="120"/>
    </location>
</feature>
<feature type="modified residue" description="Phosphoserine" evidence="15 18 19 22 23 24">
    <location>
        <position position="153"/>
    </location>
</feature>
<feature type="modified residue" description="Phosphoserine" evidence="15 19 22 23 24">
    <location>
        <position position="181"/>
    </location>
</feature>
<feature type="modified residue" description="Phosphoserine" evidence="15 19 21 22 23 24">
    <location>
        <position position="188"/>
    </location>
</feature>
<feature type="modified residue" description="Phosphoserine" evidence="15 22 23">
    <location>
        <position position="193"/>
    </location>
</feature>
<feature type="splice variant" id="VSP_024945" description="In isoform 2." evidence="9 10 11 12 13">
    <original>RRHRSSSGSSHSGSRSSSKKK</original>
    <variation>SQVIGENTKQP</variation>
    <location>
        <begin position="310"/>
        <end position="330"/>
    </location>
</feature>
<feature type="sequence variant" id="VAR_030783" description="In dbSNP:rs11583800." evidence="5 8">
    <original>R</original>
    <variation>G</variation>
    <location>
        <position position="207"/>
    </location>
</feature>
<feature type="sequence conflict" description="In Ref. 4; BAD96578." evidence="14" ref="4">
    <original>E</original>
    <variation>G</variation>
    <location>
        <position position="41"/>
    </location>
</feature>
<feature type="strand" evidence="26">
    <location>
        <begin position="10"/>
        <end position="12"/>
    </location>
</feature>
<feature type="turn" evidence="26">
    <location>
        <begin position="18"/>
        <end position="20"/>
    </location>
</feature>
<feature type="strand" evidence="26">
    <location>
        <begin position="32"/>
        <end position="34"/>
    </location>
</feature>
<feature type="strand" evidence="27">
    <location>
        <begin position="65"/>
        <end position="68"/>
    </location>
</feature>
<feature type="turn" evidence="28">
    <location>
        <begin position="72"/>
        <end position="74"/>
    </location>
</feature>
<feature type="turn" evidence="28">
    <location>
        <begin position="86"/>
        <end position="88"/>
    </location>
</feature>
<feature type="modified residue" description="Phosphothreonine" evidence="19 23">
    <location sequence="O95218-2">
        <position position="303"/>
    </location>
</feature>
<feature type="modified residue" description="Phosphoserine" evidence="16 19 21 22 23">
    <location sequence="O95218-2">
        <position position="305"/>
    </location>
</feature>
<feature type="modified residue" description="Phosphoserine" evidence="16 19 21 22 23">
    <location sequence="O95218-2">
        <position position="307"/>
    </location>
</feature>
<feature type="modified residue" description="Phosphoserine" evidence="16 19 22">
    <location sequence="O95218-2">
        <position position="310"/>
    </location>
</feature>
<protein>
    <recommendedName>
        <fullName>Zinc finger Ran-binding domain-containing protein 2</fullName>
    </recommendedName>
    <alternativeName>
        <fullName>Zinc finger protein 265</fullName>
    </alternativeName>
    <alternativeName>
        <fullName>Zinc finger, splicing</fullName>
    </alternativeName>
</protein>
<keyword id="KW-0002">3D-structure</keyword>
<keyword id="KW-0007">Acetylation</keyword>
<keyword id="KW-0025">Alternative splicing</keyword>
<keyword id="KW-0479">Metal-binding</keyword>
<keyword id="KW-0507">mRNA processing</keyword>
<keyword id="KW-0508">mRNA splicing</keyword>
<keyword id="KW-0539">Nucleus</keyword>
<keyword id="KW-0597">Phosphoprotein</keyword>
<keyword id="KW-1267">Proteomics identification</keyword>
<keyword id="KW-1185">Reference proteome</keyword>
<keyword id="KW-0677">Repeat</keyword>
<keyword id="KW-0694">RNA-binding</keyword>
<keyword id="KW-0862">Zinc</keyword>
<keyword id="KW-0863">Zinc-finger</keyword>
<name>ZRAB2_HUMAN</name>
<reference key="1">
    <citation type="journal article" date="1998" name="Gene">
        <title>Identification, characterization and mapping of the human ZIS (zinc-finger, splicing) gene.</title>
        <authorList>
            <person name="Nakano M."/>
            <person name="Yoshiura K."/>
            <person name="Oikawa M."/>
            <person name="Miyoshi O."/>
            <person name="Yamada K."/>
            <person name="Kondo S."/>
            <person name="Miwa N."/>
            <person name="Soeda E."/>
            <person name="Jinno Y."/>
            <person name="Fujii T."/>
            <person name="Niikawa N."/>
        </authorList>
    </citation>
    <scope>NUCLEOTIDE SEQUENCE [MRNA] (ISOFORMS 1 AND 2)</scope>
    <source>
        <tissue>Fetal brain</tissue>
    </source>
</reference>
<reference key="2">
    <citation type="journal article" date="2001" name="Genome Res.">
        <title>Towards a catalog of human genes and proteins: sequencing and analysis of 500 novel complete protein coding human cDNAs.</title>
        <authorList>
            <person name="Wiemann S."/>
            <person name="Weil B."/>
            <person name="Wellenreuther R."/>
            <person name="Gassenhuber J."/>
            <person name="Glassl S."/>
            <person name="Ansorge W."/>
            <person name="Boecher M."/>
            <person name="Bloecker H."/>
            <person name="Bauersachs S."/>
            <person name="Blum H."/>
            <person name="Lauber J."/>
            <person name="Duesterhoeft A."/>
            <person name="Beyer A."/>
            <person name="Koehrer K."/>
            <person name="Strack N."/>
            <person name="Mewes H.-W."/>
            <person name="Ottenwaelder B."/>
            <person name="Obermaier B."/>
            <person name="Tampe J."/>
            <person name="Heubner D."/>
            <person name="Wambutt R."/>
            <person name="Korn B."/>
            <person name="Klein M."/>
            <person name="Poustka A."/>
        </authorList>
    </citation>
    <scope>NUCLEOTIDE SEQUENCE [LARGE SCALE MRNA] (ISOFORM 2)</scope>
    <source>
        <tissue>Uterus</tissue>
    </source>
</reference>
<reference key="3">
    <citation type="submission" date="2005-03" db="EMBL/GenBank/DDBJ databases">
        <authorList>
            <person name="Totoki Y."/>
            <person name="Toyoda A."/>
            <person name="Takeda T."/>
            <person name="Sakaki Y."/>
            <person name="Tanaka A."/>
            <person name="Yokoyama S."/>
            <person name="Ohara O."/>
            <person name="Nagase T."/>
            <person name="Kikuno R.F."/>
        </authorList>
    </citation>
    <scope>NUCLEOTIDE SEQUENCE [LARGE SCALE MRNA] (ISOFORM 2)</scope>
    <source>
        <tissue>Brain</tissue>
    </source>
</reference>
<reference key="4">
    <citation type="submission" date="2005-04" db="EMBL/GenBank/DDBJ databases">
        <authorList>
            <person name="Suzuki Y."/>
            <person name="Sugano S."/>
            <person name="Totoki Y."/>
            <person name="Toyoda A."/>
            <person name="Takeda T."/>
            <person name="Sakaki Y."/>
            <person name="Tanaka A."/>
            <person name="Yokoyama S."/>
        </authorList>
    </citation>
    <scope>NUCLEOTIDE SEQUENCE [LARGE SCALE MRNA] (ISOFORM 2)</scope>
    <source>
        <tissue>Liver</tissue>
    </source>
</reference>
<reference key="5">
    <citation type="journal article" date="2006" name="Nature">
        <title>The DNA sequence and biological annotation of human chromosome 1.</title>
        <authorList>
            <person name="Gregory S.G."/>
            <person name="Barlow K.F."/>
            <person name="McLay K.E."/>
            <person name="Kaul R."/>
            <person name="Swarbreck D."/>
            <person name="Dunham A."/>
            <person name="Scott C.E."/>
            <person name="Howe K.L."/>
            <person name="Woodfine K."/>
            <person name="Spencer C.C.A."/>
            <person name="Jones M.C."/>
            <person name="Gillson C."/>
            <person name="Searle S."/>
            <person name="Zhou Y."/>
            <person name="Kokocinski F."/>
            <person name="McDonald L."/>
            <person name="Evans R."/>
            <person name="Phillips K."/>
            <person name="Atkinson A."/>
            <person name="Cooper R."/>
            <person name="Jones C."/>
            <person name="Hall R.E."/>
            <person name="Andrews T.D."/>
            <person name="Lloyd C."/>
            <person name="Ainscough R."/>
            <person name="Almeida J.P."/>
            <person name="Ambrose K.D."/>
            <person name="Anderson F."/>
            <person name="Andrew R.W."/>
            <person name="Ashwell R.I.S."/>
            <person name="Aubin K."/>
            <person name="Babbage A.K."/>
            <person name="Bagguley C.L."/>
            <person name="Bailey J."/>
            <person name="Beasley H."/>
            <person name="Bethel G."/>
            <person name="Bird C.P."/>
            <person name="Bray-Allen S."/>
            <person name="Brown J.Y."/>
            <person name="Brown A.J."/>
            <person name="Buckley D."/>
            <person name="Burton J."/>
            <person name="Bye J."/>
            <person name="Carder C."/>
            <person name="Chapman J.C."/>
            <person name="Clark S.Y."/>
            <person name="Clarke G."/>
            <person name="Clee C."/>
            <person name="Cobley V."/>
            <person name="Collier R.E."/>
            <person name="Corby N."/>
            <person name="Coville G.J."/>
            <person name="Davies J."/>
            <person name="Deadman R."/>
            <person name="Dunn M."/>
            <person name="Earthrowl M."/>
            <person name="Ellington A.G."/>
            <person name="Errington H."/>
            <person name="Frankish A."/>
            <person name="Frankland J."/>
            <person name="French L."/>
            <person name="Garner P."/>
            <person name="Garnett J."/>
            <person name="Gay L."/>
            <person name="Ghori M.R.J."/>
            <person name="Gibson R."/>
            <person name="Gilby L.M."/>
            <person name="Gillett W."/>
            <person name="Glithero R.J."/>
            <person name="Grafham D.V."/>
            <person name="Griffiths C."/>
            <person name="Griffiths-Jones S."/>
            <person name="Grocock R."/>
            <person name="Hammond S."/>
            <person name="Harrison E.S.I."/>
            <person name="Hart E."/>
            <person name="Haugen E."/>
            <person name="Heath P.D."/>
            <person name="Holmes S."/>
            <person name="Holt K."/>
            <person name="Howden P.J."/>
            <person name="Hunt A.R."/>
            <person name="Hunt S.E."/>
            <person name="Hunter G."/>
            <person name="Isherwood J."/>
            <person name="James R."/>
            <person name="Johnson C."/>
            <person name="Johnson D."/>
            <person name="Joy A."/>
            <person name="Kay M."/>
            <person name="Kershaw J.K."/>
            <person name="Kibukawa M."/>
            <person name="Kimberley A.M."/>
            <person name="King A."/>
            <person name="Knights A.J."/>
            <person name="Lad H."/>
            <person name="Laird G."/>
            <person name="Lawlor S."/>
            <person name="Leongamornlert D.A."/>
            <person name="Lloyd D.M."/>
            <person name="Loveland J."/>
            <person name="Lovell J."/>
            <person name="Lush M.J."/>
            <person name="Lyne R."/>
            <person name="Martin S."/>
            <person name="Mashreghi-Mohammadi M."/>
            <person name="Matthews L."/>
            <person name="Matthews N.S.W."/>
            <person name="McLaren S."/>
            <person name="Milne S."/>
            <person name="Mistry S."/>
            <person name="Moore M.J.F."/>
            <person name="Nickerson T."/>
            <person name="O'Dell C.N."/>
            <person name="Oliver K."/>
            <person name="Palmeiri A."/>
            <person name="Palmer S.A."/>
            <person name="Parker A."/>
            <person name="Patel D."/>
            <person name="Pearce A.V."/>
            <person name="Peck A.I."/>
            <person name="Pelan S."/>
            <person name="Phelps K."/>
            <person name="Phillimore B.J."/>
            <person name="Plumb R."/>
            <person name="Rajan J."/>
            <person name="Raymond C."/>
            <person name="Rouse G."/>
            <person name="Saenphimmachak C."/>
            <person name="Sehra H.K."/>
            <person name="Sheridan E."/>
            <person name="Shownkeen R."/>
            <person name="Sims S."/>
            <person name="Skuce C.D."/>
            <person name="Smith M."/>
            <person name="Steward C."/>
            <person name="Subramanian S."/>
            <person name="Sycamore N."/>
            <person name="Tracey A."/>
            <person name="Tromans A."/>
            <person name="Van Helmond Z."/>
            <person name="Wall M."/>
            <person name="Wallis J.M."/>
            <person name="White S."/>
            <person name="Whitehead S.L."/>
            <person name="Wilkinson J.E."/>
            <person name="Willey D.L."/>
            <person name="Williams H."/>
            <person name="Wilming L."/>
            <person name="Wray P.W."/>
            <person name="Wu Z."/>
            <person name="Coulson A."/>
            <person name="Vaudin M."/>
            <person name="Sulston J.E."/>
            <person name="Durbin R.M."/>
            <person name="Hubbard T."/>
            <person name="Wooster R."/>
            <person name="Dunham I."/>
            <person name="Carter N.P."/>
            <person name="McVean G."/>
            <person name="Ross M.T."/>
            <person name="Harrow J."/>
            <person name="Olson M.V."/>
            <person name="Beck S."/>
            <person name="Rogers J."/>
            <person name="Bentley D.R."/>
        </authorList>
    </citation>
    <scope>NUCLEOTIDE SEQUENCE [LARGE SCALE GENOMIC DNA]</scope>
</reference>
<reference key="6">
    <citation type="submission" date="2005-09" db="EMBL/GenBank/DDBJ databases">
        <authorList>
            <person name="Mural R.J."/>
            <person name="Istrail S."/>
            <person name="Sutton G.G."/>
            <person name="Florea L."/>
            <person name="Halpern A.L."/>
            <person name="Mobarry C.M."/>
            <person name="Lippert R."/>
            <person name="Walenz B."/>
            <person name="Shatkay H."/>
            <person name="Dew I."/>
            <person name="Miller J.R."/>
            <person name="Flanigan M.J."/>
            <person name="Edwards N.J."/>
            <person name="Bolanos R."/>
            <person name="Fasulo D."/>
            <person name="Halldorsson B.V."/>
            <person name="Hannenhalli S."/>
            <person name="Turner R."/>
            <person name="Yooseph S."/>
            <person name="Lu F."/>
            <person name="Nusskern D.R."/>
            <person name="Shue B.C."/>
            <person name="Zheng X.H."/>
            <person name="Zhong F."/>
            <person name="Delcher A.L."/>
            <person name="Huson D.H."/>
            <person name="Kravitz S.A."/>
            <person name="Mouchard L."/>
            <person name="Reinert K."/>
            <person name="Remington K.A."/>
            <person name="Clark A.G."/>
            <person name="Waterman M.S."/>
            <person name="Eichler E.E."/>
            <person name="Adams M.D."/>
            <person name="Hunkapiller M.W."/>
            <person name="Myers E.W."/>
            <person name="Venter J.C."/>
        </authorList>
    </citation>
    <scope>NUCLEOTIDE SEQUENCE [LARGE SCALE GENOMIC DNA]</scope>
    <scope>VARIANT GLY-207</scope>
</reference>
<reference key="7">
    <citation type="journal article" date="2004" name="Genome Res.">
        <title>The status, quality, and expansion of the NIH full-length cDNA project: the Mammalian Gene Collection (MGC).</title>
        <authorList>
            <consortium name="The MGC Project Team"/>
        </authorList>
    </citation>
    <scope>NUCLEOTIDE SEQUENCE [LARGE SCALE MRNA] (ISOFORM 2)</scope>
    <scope>VARIANT GLY-207</scope>
    <source>
        <tissue>Skin</tissue>
    </source>
</reference>
<reference key="8">
    <citation type="journal article" date="2001" name="J. Cell Biol.">
        <title>ZNF265 -- a novel spliceosomal protein able to induce alternative splicing.</title>
        <authorList>
            <person name="Adams D.J."/>
            <person name="van der Weyden L."/>
            <person name="Mayeda A."/>
            <person name="Stamm S."/>
            <person name="Morris B.J."/>
            <person name="Rasko J.E.J."/>
        </authorList>
    </citation>
    <scope>FUNCTION</scope>
    <scope>SUBCELLULAR LOCATION</scope>
    <scope>INTERACTION WITH SNRNP70; U2AF1 AND CLK1</scope>
</reference>
<reference key="9">
    <citation type="journal article" date="2006" name="Cell">
        <title>Global, in vivo, and site-specific phosphorylation dynamics in signaling networks.</title>
        <authorList>
            <person name="Olsen J.V."/>
            <person name="Blagoev B."/>
            <person name="Gnad F."/>
            <person name="Macek B."/>
            <person name="Kumar C."/>
            <person name="Mortensen P."/>
            <person name="Mann M."/>
        </authorList>
    </citation>
    <scope>PHOSPHORYLATION [LARGE SCALE ANALYSIS] AT SER-120; SER-153; SER-181; SER-188 AND SER-193</scope>
    <scope>IDENTIFICATION BY MASS SPECTROMETRY [LARGE SCALE ANALYSIS]</scope>
    <source>
        <tissue>Cervix carcinoma</tissue>
    </source>
</reference>
<reference key="10">
    <citation type="journal article" date="2006" name="Nucleic Acids Res.">
        <title>XE7: a novel splicing factor that interacts with ASF/SF2 and ZNF265.</title>
        <authorList>
            <person name="Mangs A.H."/>
            <person name="Speirs H.J.L."/>
            <person name="Goy C."/>
            <person name="Adams D.J."/>
            <person name="Markus M.A."/>
            <person name="Morris B.J."/>
        </authorList>
    </citation>
    <scope>INTERACTION WITH AKAP17A</scope>
</reference>
<reference key="11">
    <citation type="journal article" date="2007" name="Science">
        <title>ATM and ATR substrate analysis reveals extensive protein networks responsive to DNA damage.</title>
        <authorList>
            <person name="Matsuoka S."/>
            <person name="Ballif B.A."/>
            <person name="Smogorzewska A."/>
            <person name="McDonald E.R. III"/>
            <person name="Hurov K.E."/>
            <person name="Luo J."/>
            <person name="Bakalarski C.E."/>
            <person name="Zhao Z."/>
            <person name="Solimini N."/>
            <person name="Lerenthal Y."/>
            <person name="Shiloh Y."/>
            <person name="Gygi S.P."/>
            <person name="Elledge S.J."/>
        </authorList>
    </citation>
    <scope>PHOSPHORYLATION [LARGE SCALE ANALYSIS] AT SER-305; SER-307 AND SER-310 (ISOFORM 2)</scope>
    <scope>IDENTIFICATION BY MASS SPECTROMETRY [LARGE SCALE ANALYSIS]</scope>
    <source>
        <tissue>Embryonic kidney</tissue>
    </source>
</reference>
<reference key="12">
    <citation type="journal article" date="2008" name="J. Proteome Res.">
        <title>Combining protein-based IMAC, peptide-based IMAC, and MudPIT for efficient phosphoproteomic analysis.</title>
        <authorList>
            <person name="Cantin G.T."/>
            <person name="Yi W."/>
            <person name="Lu B."/>
            <person name="Park S.K."/>
            <person name="Xu T."/>
            <person name="Lee J.-D."/>
            <person name="Yates J.R. III"/>
        </authorList>
    </citation>
    <scope>PHOSPHORYLATION [LARGE SCALE ANALYSIS] AT SER-120</scope>
    <scope>IDENTIFICATION BY MASS SPECTROMETRY [LARGE SCALE ANALYSIS]</scope>
    <source>
        <tissue>Cervix carcinoma</tissue>
    </source>
</reference>
<reference key="13">
    <citation type="journal article" date="2008" name="Proc. Natl. Acad. Sci. U.S.A.">
        <title>A quantitative atlas of mitotic phosphorylation.</title>
        <authorList>
            <person name="Dephoure N."/>
            <person name="Zhou C."/>
            <person name="Villen J."/>
            <person name="Beausoleil S.A."/>
            <person name="Bakalarski C.E."/>
            <person name="Elledge S.J."/>
            <person name="Gygi S.P."/>
        </authorList>
    </citation>
    <scope>PHOSPHORYLATION [LARGE SCALE ANALYSIS] AT SER-120; SER-153; SER-181 AND SER-188</scope>
    <scope>PHOSPHORYLATION [LARGE SCALE ANALYSIS] AT THR-303; SER-305; SER-307 AND SER-310 (ISOFORM 2)</scope>
    <scope>IDENTIFICATION BY MASS SPECTROMETRY [LARGE SCALE ANALYSIS]</scope>
    <source>
        <tissue>Cervix carcinoma</tissue>
    </source>
</reference>
<reference key="14">
    <citation type="journal article" date="2008" name="Proteomics">
        <title>Large-scale phosphoproteome analysis of human liver tissue by enrichment and fractionation of phosphopeptides with strong anion exchange chromatography.</title>
        <authorList>
            <person name="Han G."/>
            <person name="Ye M."/>
            <person name="Zhou H."/>
            <person name="Jiang X."/>
            <person name="Feng S."/>
            <person name="Jiang X."/>
            <person name="Tian R."/>
            <person name="Wan D."/>
            <person name="Zou H."/>
            <person name="Gu J."/>
        </authorList>
    </citation>
    <scope>PHOSPHORYLATION [LARGE SCALE ANALYSIS] AT SER-120 AND SER-153</scope>
    <scope>IDENTIFICATION BY MASS SPECTROMETRY [LARGE SCALE ANALYSIS]</scope>
    <source>
        <tissue>Liver</tissue>
    </source>
</reference>
<reference key="15">
    <citation type="journal article" date="2009" name="Anal. Chem.">
        <title>Lys-N and trypsin cover complementary parts of the phosphoproteome in a refined SCX-based approach.</title>
        <authorList>
            <person name="Gauci S."/>
            <person name="Helbig A.O."/>
            <person name="Slijper M."/>
            <person name="Krijgsveld J."/>
            <person name="Heck A.J."/>
            <person name="Mohammed S."/>
        </authorList>
    </citation>
    <scope>IDENTIFICATION BY MASS SPECTROMETRY [LARGE SCALE ANALYSIS]</scope>
</reference>
<reference key="16">
    <citation type="journal article" date="2009" name="Sci. Signal.">
        <title>Quantitative phosphoproteomic analysis of T cell receptor signaling reveals system-wide modulation of protein-protein interactions.</title>
        <authorList>
            <person name="Mayya V."/>
            <person name="Lundgren D.H."/>
            <person name="Hwang S.-I."/>
            <person name="Rezaul K."/>
            <person name="Wu L."/>
            <person name="Eng J.K."/>
            <person name="Rodionov V."/>
            <person name="Han D.K."/>
        </authorList>
    </citation>
    <scope>PHOSPHORYLATION [LARGE SCALE ANALYSIS] AT SER-120 AND SER-188</scope>
    <scope>PHOSPHORYLATION [LARGE SCALE ANALYSIS] AT SER-305 AND SER-307 (ISOFORM 2)</scope>
    <scope>IDENTIFICATION BY MASS SPECTROMETRY [LARGE SCALE ANALYSIS]</scope>
    <source>
        <tissue>Leukemic T-cell</tissue>
    </source>
</reference>
<reference key="17">
    <citation type="journal article" date="2009" name="Science">
        <title>Lysine acetylation targets protein complexes and co-regulates major cellular functions.</title>
        <authorList>
            <person name="Choudhary C."/>
            <person name="Kumar C."/>
            <person name="Gnad F."/>
            <person name="Nielsen M.L."/>
            <person name="Rehman M."/>
            <person name="Walther T.C."/>
            <person name="Olsen J.V."/>
            <person name="Mann M."/>
        </authorList>
    </citation>
    <scope>ACETYLATION [LARGE SCALE ANALYSIS] AT LYS-54</scope>
    <scope>IDENTIFICATION BY MASS SPECTROMETRY [LARGE SCALE ANALYSIS]</scope>
</reference>
<reference key="18">
    <citation type="journal article" date="2010" name="Sci. Signal.">
        <title>Quantitative phosphoproteomics reveals widespread full phosphorylation site occupancy during mitosis.</title>
        <authorList>
            <person name="Olsen J.V."/>
            <person name="Vermeulen M."/>
            <person name="Santamaria A."/>
            <person name="Kumar C."/>
            <person name="Miller M.L."/>
            <person name="Jensen L.J."/>
            <person name="Gnad F."/>
            <person name="Cox J."/>
            <person name="Jensen T.S."/>
            <person name="Nigg E.A."/>
            <person name="Brunak S."/>
            <person name="Mann M."/>
        </authorList>
    </citation>
    <scope>PHOSPHORYLATION [LARGE SCALE ANALYSIS] AT SER-9; SER-120; SER-153; SER-181; SER-188 AND SER-193</scope>
    <scope>PHOSPHORYLATION [LARGE SCALE ANALYSIS] AT SER-305; SER-307 AND SER-310 (ISOFORM 2)</scope>
    <scope>IDENTIFICATION BY MASS SPECTROMETRY [LARGE SCALE ANALYSIS]</scope>
    <source>
        <tissue>Cervix carcinoma</tissue>
    </source>
</reference>
<reference key="19">
    <citation type="journal article" date="2011" name="BMC Syst. Biol.">
        <title>Initial characterization of the human central proteome.</title>
        <authorList>
            <person name="Burkard T.R."/>
            <person name="Planyavsky M."/>
            <person name="Kaupe I."/>
            <person name="Breitwieser F.P."/>
            <person name="Buerckstuemmer T."/>
            <person name="Bennett K.L."/>
            <person name="Superti-Furga G."/>
            <person name="Colinge J."/>
        </authorList>
    </citation>
    <scope>IDENTIFICATION BY MASS SPECTROMETRY [LARGE SCALE ANALYSIS]</scope>
</reference>
<reference key="20">
    <citation type="journal article" date="2011" name="J. Mol. Biol.">
        <title>Characterization of a family of RanBP2-type zinc fingers that can recognize single-stranded RNA.</title>
        <authorList>
            <person name="Nguyen C.D."/>
            <person name="Mansfield R.E."/>
            <person name="Leung W."/>
            <person name="Vaz P.M."/>
            <person name="Loughlin F.E."/>
            <person name="Grant R.P."/>
            <person name="Mackay J.P."/>
        </authorList>
    </citation>
    <scope>FUNCTION</scope>
</reference>
<reference key="21">
    <citation type="journal article" date="2011" name="Sci. Signal.">
        <title>System-wide temporal characterization of the proteome and phosphoproteome of human embryonic stem cell differentiation.</title>
        <authorList>
            <person name="Rigbolt K.T."/>
            <person name="Prokhorova T.A."/>
            <person name="Akimov V."/>
            <person name="Henningsen J."/>
            <person name="Johansen P.T."/>
            <person name="Kratchmarova I."/>
            <person name="Kassem M."/>
            <person name="Mann M."/>
            <person name="Olsen J.V."/>
            <person name="Blagoev B."/>
        </authorList>
    </citation>
    <scope>PHOSPHORYLATION [LARGE SCALE ANALYSIS] AT SER-120; SER-153; SER-181; SER-188 AND SER-193</scope>
    <scope>PHOSPHORYLATION [LARGE SCALE ANALYSIS] AT THR-303; SER-305 AND SER-307 (ISOFORM 2)</scope>
    <scope>IDENTIFICATION BY MASS SPECTROMETRY [LARGE SCALE ANALYSIS]</scope>
</reference>
<reference key="22">
    <citation type="journal article" date="2013" name="J. Proteome Res.">
        <title>Toward a comprehensive characterization of a human cancer cell phosphoproteome.</title>
        <authorList>
            <person name="Zhou H."/>
            <person name="Di Palma S."/>
            <person name="Preisinger C."/>
            <person name="Peng M."/>
            <person name="Polat A.N."/>
            <person name="Heck A.J."/>
            <person name="Mohammed S."/>
        </authorList>
    </citation>
    <scope>PHOSPHORYLATION [LARGE SCALE ANALYSIS] AT SER-120; SER-153; SER-181 AND SER-188</scope>
    <scope>IDENTIFICATION BY MASS SPECTROMETRY [LARGE SCALE ANALYSIS]</scope>
    <source>
        <tissue>Cervix carcinoma</tissue>
        <tissue>Erythroleukemia</tissue>
    </source>
</reference>
<reference key="23">
    <citation type="journal article" date="2014" name="J. Proteomics">
        <title>An enzyme assisted RP-RPLC approach for in-depth analysis of human liver phosphoproteome.</title>
        <authorList>
            <person name="Bian Y."/>
            <person name="Song C."/>
            <person name="Cheng K."/>
            <person name="Dong M."/>
            <person name="Wang F."/>
            <person name="Huang J."/>
            <person name="Sun D."/>
            <person name="Wang L."/>
            <person name="Ye M."/>
            <person name="Zou H."/>
        </authorList>
    </citation>
    <scope>PHOSPHORYLATION [LARGE SCALE ANALYSIS] AT SER-120</scope>
    <scope>IDENTIFICATION BY MASS SPECTROMETRY [LARGE SCALE ANALYSIS]</scope>
    <source>
        <tissue>Liver</tissue>
    </source>
</reference>
<reference key="24">
    <citation type="journal article" date="2003" name="J. Biol. Chem.">
        <title>The structure of the zinc finger domain from human splicing factor ZNF265 fold.</title>
        <authorList>
            <person name="Plambeck C.A."/>
            <person name="Kwan A.H.Y."/>
            <person name="Adams D.J."/>
            <person name="Westman B.J."/>
            <person name="van der Weyden L."/>
            <person name="Medcalf R.L."/>
            <person name="Morris B.J."/>
            <person name="Mackay J.P."/>
        </authorList>
    </citation>
    <scope>STRUCTURE BY NMR OF 1-40</scope>
    <scope>RNA-BINDING</scope>
</reference>
<dbReference type="EMBL" id="AF065391">
    <property type="protein sequence ID" value="AAD09746.1"/>
    <property type="status" value="ALT_FRAME"/>
    <property type="molecule type" value="mRNA"/>
</dbReference>
<dbReference type="EMBL" id="AF065392">
    <property type="protein sequence ID" value="AAD09747.1"/>
    <property type="status" value="ALT_FRAME"/>
    <property type="molecule type" value="mRNA"/>
</dbReference>
<dbReference type="EMBL" id="AL136945">
    <property type="protein sequence ID" value="CAB66879.1"/>
    <property type="status" value="ALT_FRAME"/>
    <property type="molecule type" value="mRNA"/>
</dbReference>
<dbReference type="EMBL" id="AB209568">
    <property type="protein sequence ID" value="BAD92805.1"/>
    <property type="status" value="ALT_SEQ"/>
    <property type="molecule type" value="mRNA"/>
</dbReference>
<dbReference type="EMBL" id="AK222858">
    <property type="protein sequence ID" value="BAD96578.1"/>
    <property type="molecule type" value="mRNA"/>
</dbReference>
<dbReference type="EMBL" id="AL512443">
    <property type="status" value="NOT_ANNOTATED_CDS"/>
    <property type="molecule type" value="Genomic_DNA"/>
</dbReference>
<dbReference type="EMBL" id="CH471059">
    <property type="protein sequence ID" value="EAX06433.1"/>
    <property type="molecule type" value="Genomic_DNA"/>
</dbReference>
<dbReference type="EMBL" id="CH471059">
    <property type="protein sequence ID" value="EAX06435.1"/>
    <property type="molecule type" value="Genomic_DNA"/>
</dbReference>
<dbReference type="EMBL" id="BC039814">
    <property type="protein sequence ID" value="AAH39814.1"/>
    <property type="molecule type" value="mRNA"/>
</dbReference>
<dbReference type="CCDS" id="CCDS659.1">
    <molecule id="O95218-1"/>
</dbReference>
<dbReference type="CCDS" id="CCDS660.1">
    <molecule id="O95218-2"/>
</dbReference>
<dbReference type="RefSeq" id="NP_005446.2">
    <molecule id="O95218-2"/>
    <property type="nucleotide sequence ID" value="NM_005455.4"/>
</dbReference>
<dbReference type="RefSeq" id="NP_976225.1">
    <molecule id="O95218-1"/>
    <property type="nucleotide sequence ID" value="NM_203350.3"/>
</dbReference>
<dbReference type="RefSeq" id="XP_047290689.1">
    <molecule id="O95218-2"/>
    <property type="nucleotide sequence ID" value="XM_047434733.1"/>
</dbReference>
<dbReference type="RefSeq" id="XP_054195653.1">
    <molecule id="O95218-2"/>
    <property type="nucleotide sequence ID" value="XM_054339678.1"/>
</dbReference>
<dbReference type="PDB" id="1N0Z">
    <property type="method" value="NMR"/>
    <property type="chains" value="A=1-40"/>
</dbReference>
<dbReference type="PDB" id="2K1P">
    <property type="method" value="NMR"/>
    <property type="chains" value="A=65-95"/>
</dbReference>
<dbReference type="PDB" id="3G9Y">
    <property type="method" value="X-ray"/>
    <property type="resolution" value="1.40 A"/>
    <property type="chains" value="A=65-95"/>
</dbReference>
<dbReference type="PDBsum" id="1N0Z"/>
<dbReference type="PDBsum" id="2K1P"/>
<dbReference type="PDBsum" id="3G9Y"/>
<dbReference type="SMR" id="O95218"/>
<dbReference type="BioGRID" id="114802">
    <property type="interactions" value="244"/>
</dbReference>
<dbReference type="CORUM" id="O95218"/>
<dbReference type="FunCoup" id="O95218">
    <property type="interactions" value="1288"/>
</dbReference>
<dbReference type="IntAct" id="O95218">
    <property type="interactions" value="626"/>
</dbReference>
<dbReference type="MINT" id="O95218"/>
<dbReference type="STRING" id="9606.ENSP00000359958"/>
<dbReference type="GlyGen" id="O95218">
    <property type="glycosylation" value="1 site, 1 O-linked glycan (1 site)"/>
</dbReference>
<dbReference type="iPTMnet" id="O95218"/>
<dbReference type="MetOSite" id="O95218"/>
<dbReference type="PhosphoSitePlus" id="O95218"/>
<dbReference type="BioMuta" id="ZRANB2"/>
<dbReference type="jPOST" id="O95218"/>
<dbReference type="MassIVE" id="O95218"/>
<dbReference type="PaxDb" id="9606-ENSP00000359958"/>
<dbReference type="PeptideAtlas" id="O95218"/>
<dbReference type="ProteomicsDB" id="50722">
    <molecule id="O95218-1"/>
</dbReference>
<dbReference type="ProteomicsDB" id="50723">
    <molecule id="O95218-2"/>
</dbReference>
<dbReference type="Pumba" id="O95218"/>
<dbReference type="TopDownProteomics" id="O95218-1">
    <molecule id="O95218-1"/>
</dbReference>
<dbReference type="Antibodypedia" id="19679">
    <property type="antibodies" value="281 antibodies from 30 providers"/>
</dbReference>
<dbReference type="DNASU" id="9406"/>
<dbReference type="Ensembl" id="ENST00000254821.10">
    <molecule id="O95218-2"/>
    <property type="protein sequence ID" value="ENSP00000254821.6"/>
    <property type="gene ID" value="ENSG00000132485.14"/>
</dbReference>
<dbReference type="Ensembl" id="ENST00000370920.8">
    <molecule id="O95218-1"/>
    <property type="protein sequence ID" value="ENSP00000359958.3"/>
    <property type="gene ID" value="ENSG00000132485.14"/>
</dbReference>
<dbReference type="Ensembl" id="ENST00000611683.1">
    <molecule id="O95218-2"/>
    <property type="protein sequence ID" value="ENSP00000482026.1"/>
    <property type="gene ID" value="ENSG00000132485.14"/>
</dbReference>
<dbReference type="GeneID" id="9406"/>
<dbReference type="KEGG" id="hsa:9406"/>
<dbReference type="MANE-Select" id="ENST00000370920.8">
    <property type="protein sequence ID" value="ENSP00000359958.3"/>
    <property type="RefSeq nucleotide sequence ID" value="NM_203350.3"/>
    <property type="RefSeq protein sequence ID" value="NP_976225.1"/>
</dbReference>
<dbReference type="UCSC" id="uc001dfs.4">
    <molecule id="O95218-1"/>
    <property type="organism name" value="human"/>
</dbReference>
<dbReference type="AGR" id="HGNC:13058"/>
<dbReference type="CTD" id="9406"/>
<dbReference type="DisGeNET" id="9406"/>
<dbReference type="GeneCards" id="ZRANB2"/>
<dbReference type="HGNC" id="HGNC:13058">
    <property type="gene designation" value="ZRANB2"/>
</dbReference>
<dbReference type="HPA" id="ENSG00000132485">
    <property type="expression patterns" value="Low tissue specificity"/>
</dbReference>
<dbReference type="MIM" id="604347">
    <property type="type" value="gene"/>
</dbReference>
<dbReference type="neXtProt" id="NX_O95218"/>
<dbReference type="OpenTargets" id="ENSG00000132485"/>
<dbReference type="PharmGKB" id="PA37636"/>
<dbReference type="VEuPathDB" id="HostDB:ENSG00000132485"/>
<dbReference type="eggNOG" id="KOG1995">
    <property type="taxonomic scope" value="Eukaryota"/>
</dbReference>
<dbReference type="GeneTree" id="ENSGT00730000111078"/>
<dbReference type="HOGENOM" id="CLU_061048_0_0_1"/>
<dbReference type="InParanoid" id="O95218"/>
<dbReference type="OMA" id="WICPDID"/>
<dbReference type="OrthoDB" id="1878647at2759"/>
<dbReference type="PAN-GO" id="O95218">
    <property type="GO annotations" value="1 GO annotation based on evolutionary models"/>
</dbReference>
<dbReference type="PhylomeDB" id="O95218"/>
<dbReference type="TreeFam" id="TF105996"/>
<dbReference type="PathwayCommons" id="O95218"/>
<dbReference type="SignaLink" id="O95218"/>
<dbReference type="BioGRID-ORCS" id="9406">
    <property type="hits" value="227 hits in 1161 CRISPR screens"/>
</dbReference>
<dbReference type="ChiTaRS" id="ZRANB2">
    <property type="organism name" value="human"/>
</dbReference>
<dbReference type="EvolutionaryTrace" id="O95218"/>
<dbReference type="GeneWiki" id="ZRANB2"/>
<dbReference type="GenomeRNAi" id="9406"/>
<dbReference type="Pharos" id="O95218">
    <property type="development level" value="Tbio"/>
</dbReference>
<dbReference type="PRO" id="PR:O95218"/>
<dbReference type="Proteomes" id="UP000005640">
    <property type="component" value="Chromosome 1"/>
</dbReference>
<dbReference type="RNAct" id="O95218">
    <property type="molecule type" value="protein"/>
</dbReference>
<dbReference type="Bgee" id="ENSG00000132485">
    <property type="expression patterns" value="Expressed in epithelial cell of pancreas and 184 other cell types or tissues"/>
</dbReference>
<dbReference type="GO" id="GO:0005654">
    <property type="term" value="C:nucleoplasm"/>
    <property type="evidence" value="ECO:0000314"/>
    <property type="project" value="HPA"/>
</dbReference>
<dbReference type="GO" id="GO:0001530">
    <property type="term" value="F:lipopolysaccharide binding"/>
    <property type="evidence" value="ECO:0000318"/>
    <property type="project" value="GO_Central"/>
</dbReference>
<dbReference type="GO" id="GO:0003723">
    <property type="term" value="F:RNA binding"/>
    <property type="evidence" value="ECO:0007005"/>
    <property type="project" value="UniProtKB"/>
</dbReference>
<dbReference type="GO" id="GO:0008270">
    <property type="term" value="F:zinc ion binding"/>
    <property type="evidence" value="ECO:0007669"/>
    <property type="project" value="UniProtKB-KW"/>
</dbReference>
<dbReference type="GO" id="GO:0006397">
    <property type="term" value="P:mRNA processing"/>
    <property type="evidence" value="ECO:0007669"/>
    <property type="project" value="UniProtKB-KW"/>
</dbReference>
<dbReference type="GO" id="GO:0008380">
    <property type="term" value="P:RNA splicing"/>
    <property type="evidence" value="ECO:0007669"/>
    <property type="project" value="UniProtKB-KW"/>
</dbReference>
<dbReference type="FunFam" id="4.10.1060.10:FF:000004">
    <property type="entry name" value="Zinc finger Ran-binding domain-containing protein 2"/>
    <property type="match status" value="1"/>
</dbReference>
<dbReference type="FunFam" id="4.10.1060.10:FF:000007">
    <property type="entry name" value="Zinc finger Ran-binding domain-containing protein 2"/>
    <property type="match status" value="1"/>
</dbReference>
<dbReference type="Gene3D" id="4.10.1060.10">
    <property type="entry name" value="Zinc finger, RanBP2-type"/>
    <property type="match status" value="2"/>
</dbReference>
<dbReference type="InterPro" id="IPR001876">
    <property type="entry name" value="Znf_RanBP2"/>
</dbReference>
<dbReference type="InterPro" id="IPR036443">
    <property type="entry name" value="Znf_RanBP2_sf"/>
</dbReference>
<dbReference type="InterPro" id="IPR017337">
    <property type="entry name" value="ZRANB2"/>
</dbReference>
<dbReference type="PANTHER" id="PTHR12999:SF17">
    <property type="entry name" value="ZINC FINGER RAN-BINDING DOMAIN-CONTAINING PROTEIN 2"/>
    <property type="match status" value="1"/>
</dbReference>
<dbReference type="PANTHER" id="PTHR12999">
    <property type="entry name" value="ZINC FINGER RAN-BINDING DOMAIN-CONTAINING PROTEIN 2 ZRANB2-RELATED"/>
    <property type="match status" value="1"/>
</dbReference>
<dbReference type="Pfam" id="PF00641">
    <property type="entry name" value="Zn_ribbon_RanBP"/>
    <property type="match status" value="2"/>
</dbReference>
<dbReference type="PIRSF" id="PIRSF037956">
    <property type="entry name" value="UCP037956_ZnF_Ran"/>
    <property type="match status" value="1"/>
</dbReference>
<dbReference type="SMART" id="SM00547">
    <property type="entry name" value="ZnF_RBZ"/>
    <property type="match status" value="2"/>
</dbReference>
<dbReference type="SUPFAM" id="SSF90209">
    <property type="entry name" value="Ran binding protein zinc finger-like"/>
    <property type="match status" value="2"/>
</dbReference>
<dbReference type="PROSITE" id="PS01358">
    <property type="entry name" value="ZF_RANBP2_1"/>
    <property type="match status" value="2"/>
</dbReference>
<dbReference type="PROSITE" id="PS50199">
    <property type="entry name" value="ZF_RANBP2_2"/>
    <property type="match status" value="2"/>
</dbReference>